<keyword id="KW-0963">Cytoplasm</keyword>
<keyword id="KW-0704">Schiff base</keyword>
<keyword id="KW-0784">Thiamine biosynthesis</keyword>
<keyword id="KW-0808">Transferase</keyword>
<evidence type="ECO:0000255" key="1">
    <source>
        <dbReference type="HAMAP-Rule" id="MF_00443"/>
    </source>
</evidence>
<proteinExistence type="inferred from homology"/>
<accession>B9JMX8</accession>
<sequence>MLALYGTEVASRLLLGTARYPSPAILAEAVRQSATEIVTVSLRRETAGGRNGGAFFEMIRTLGVRILPNTAGCHGVSEAVLTAKMAREVFQTNWIKLEVIGNHDTLQPDVFGLVEAARILASEGFEVFPYTTDDLVVAERLLDAGCKVLMPWCAPIGSAAGPLNLSALRAMRAHFPDVPLIVDAGIGRPSHATTVMELGFDAVLLNTAVAGARDPAAMAGAFAKAIDAGRLAFTAGMLEPRDMAVPSTPVIGKAVFA</sequence>
<comment type="function">
    <text evidence="1">Catalyzes the rearrangement of 1-deoxy-D-xylulose 5-phosphate (DXP) to produce the thiazole phosphate moiety of thiamine. Sulfur is provided by the thiocarboxylate moiety of the carrier protein ThiS. In vitro, sulfur can be provided by H(2)S.</text>
</comment>
<comment type="catalytic activity">
    <reaction evidence="1">
        <text>[ThiS sulfur-carrier protein]-C-terminal-Gly-aminoethanethioate + 2-iminoacetate + 1-deoxy-D-xylulose 5-phosphate = [ThiS sulfur-carrier protein]-C-terminal Gly-Gly + 2-[(2R,5Z)-2-carboxy-4-methylthiazol-5(2H)-ylidene]ethyl phosphate + 2 H2O + H(+)</text>
        <dbReference type="Rhea" id="RHEA:26297"/>
        <dbReference type="Rhea" id="RHEA-COMP:12909"/>
        <dbReference type="Rhea" id="RHEA-COMP:19908"/>
        <dbReference type="ChEBI" id="CHEBI:15377"/>
        <dbReference type="ChEBI" id="CHEBI:15378"/>
        <dbReference type="ChEBI" id="CHEBI:57792"/>
        <dbReference type="ChEBI" id="CHEBI:62899"/>
        <dbReference type="ChEBI" id="CHEBI:77846"/>
        <dbReference type="ChEBI" id="CHEBI:90778"/>
        <dbReference type="ChEBI" id="CHEBI:232372"/>
        <dbReference type="EC" id="2.8.1.10"/>
    </reaction>
</comment>
<comment type="pathway">
    <text evidence="1">Cofactor biosynthesis; thiamine diphosphate biosynthesis.</text>
</comment>
<comment type="subunit">
    <text evidence="1">Homotetramer. Forms heterodimers with either ThiH or ThiS.</text>
</comment>
<comment type="subcellular location">
    <subcellularLocation>
        <location evidence="1">Cytoplasm</location>
    </subcellularLocation>
</comment>
<comment type="similarity">
    <text evidence="1">Belongs to the ThiG family.</text>
</comment>
<name>THIG_RHIR8</name>
<dbReference type="EC" id="2.8.1.10" evidence="1"/>
<dbReference type="EMBL" id="CP000629">
    <property type="protein sequence ID" value="ACM28909.1"/>
    <property type="molecule type" value="Genomic_DNA"/>
</dbReference>
<dbReference type="RefSeq" id="WP_007689241.1">
    <property type="nucleotide sequence ID" value="NC_011983.1"/>
</dbReference>
<dbReference type="SMR" id="B9JMX8"/>
<dbReference type="STRING" id="311403.Arad_7393"/>
<dbReference type="KEGG" id="ara:Arad_7393"/>
<dbReference type="eggNOG" id="COG2022">
    <property type="taxonomic scope" value="Bacteria"/>
</dbReference>
<dbReference type="HOGENOM" id="CLU_062233_1_0_5"/>
<dbReference type="UniPathway" id="UPA00060"/>
<dbReference type="Proteomes" id="UP000001600">
    <property type="component" value="Chromosome 2"/>
</dbReference>
<dbReference type="GO" id="GO:0005737">
    <property type="term" value="C:cytoplasm"/>
    <property type="evidence" value="ECO:0007669"/>
    <property type="project" value="UniProtKB-SubCell"/>
</dbReference>
<dbReference type="GO" id="GO:1990107">
    <property type="term" value="F:thiazole synthase activity"/>
    <property type="evidence" value="ECO:0007669"/>
    <property type="project" value="UniProtKB-EC"/>
</dbReference>
<dbReference type="GO" id="GO:0009229">
    <property type="term" value="P:thiamine diphosphate biosynthetic process"/>
    <property type="evidence" value="ECO:0007669"/>
    <property type="project" value="UniProtKB-UniRule"/>
</dbReference>
<dbReference type="CDD" id="cd04728">
    <property type="entry name" value="ThiG"/>
    <property type="match status" value="1"/>
</dbReference>
<dbReference type="Gene3D" id="3.20.20.70">
    <property type="entry name" value="Aldolase class I"/>
    <property type="match status" value="1"/>
</dbReference>
<dbReference type="HAMAP" id="MF_00443">
    <property type="entry name" value="ThiG"/>
    <property type="match status" value="1"/>
</dbReference>
<dbReference type="InterPro" id="IPR013785">
    <property type="entry name" value="Aldolase_TIM"/>
</dbReference>
<dbReference type="InterPro" id="IPR033983">
    <property type="entry name" value="Thiazole_synthase_ThiG"/>
</dbReference>
<dbReference type="InterPro" id="IPR008867">
    <property type="entry name" value="ThiG"/>
</dbReference>
<dbReference type="PANTHER" id="PTHR34266">
    <property type="entry name" value="THIAZOLE SYNTHASE"/>
    <property type="match status" value="1"/>
</dbReference>
<dbReference type="PANTHER" id="PTHR34266:SF2">
    <property type="entry name" value="THIAZOLE SYNTHASE"/>
    <property type="match status" value="1"/>
</dbReference>
<dbReference type="Pfam" id="PF05690">
    <property type="entry name" value="ThiG"/>
    <property type="match status" value="1"/>
</dbReference>
<dbReference type="SUPFAM" id="SSF110399">
    <property type="entry name" value="ThiG-like"/>
    <property type="match status" value="1"/>
</dbReference>
<organism>
    <name type="scientific">Rhizobium rhizogenes (strain K84 / ATCC BAA-868)</name>
    <name type="common">Agrobacterium radiobacter</name>
    <dbReference type="NCBI Taxonomy" id="311403"/>
    <lineage>
        <taxon>Bacteria</taxon>
        <taxon>Pseudomonadati</taxon>
        <taxon>Pseudomonadota</taxon>
        <taxon>Alphaproteobacteria</taxon>
        <taxon>Hyphomicrobiales</taxon>
        <taxon>Rhizobiaceae</taxon>
        <taxon>Rhizobium/Agrobacterium group</taxon>
        <taxon>Rhizobium</taxon>
    </lineage>
</organism>
<protein>
    <recommendedName>
        <fullName evidence="1">Thiazole synthase</fullName>
        <ecNumber evidence="1">2.8.1.10</ecNumber>
    </recommendedName>
</protein>
<feature type="chain" id="PRO_1000196832" description="Thiazole synthase">
    <location>
        <begin position="1"/>
        <end position="257"/>
    </location>
</feature>
<feature type="active site" description="Schiff-base intermediate with DXP" evidence="1">
    <location>
        <position position="96"/>
    </location>
</feature>
<feature type="binding site" evidence="1">
    <location>
        <position position="157"/>
    </location>
    <ligand>
        <name>1-deoxy-D-xylulose 5-phosphate</name>
        <dbReference type="ChEBI" id="CHEBI:57792"/>
    </ligand>
</feature>
<feature type="binding site" evidence="1">
    <location>
        <begin position="184"/>
        <end position="185"/>
    </location>
    <ligand>
        <name>1-deoxy-D-xylulose 5-phosphate</name>
        <dbReference type="ChEBI" id="CHEBI:57792"/>
    </ligand>
</feature>
<feature type="binding site" evidence="1">
    <location>
        <begin position="206"/>
        <end position="207"/>
    </location>
    <ligand>
        <name>1-deoxy-D-xylulose 5-phosphate</name>
        <dbReference type="ChEBI" id="CHEBI:57792"/>
    </ligand>
</feature>
<reference key="1">
    <citation type="journal article" date="2009" name="J. Bacteriol.">
        <title>Genome sequences of three Agrobacterium biovars help elucidate the evolution of multichromosome genomes in bacteria.</title>
        <authorList>
            <person name="Slater S.C."/>
            <person name="Goldman B.S."/>
            <person name="Goodner B."/>
            <person name="Setubal J.C."/>
            <person name="Farrand S.K."/>
            <person name="Nester E.W."/>
            <person name="Burr T.J."/>
            <person name="Banta L."/>
            <person name="Dickerman A.W."/>
            <person name="Paulsen I."/>
            <person name="Otten L."/>
            <person name="Suen G."/>
            <person name="Welch R."/>
            <person name="Almeida N.F."/>
            <person name="Arnold F."/>
            <person name="Burton O.T."/>
            <person name="Du Z."/>
            <person name="Ewing A."/>
            <person name="Godsy E."/>
            <person name="Heisel S."/>
            <person name="Houmiel K.L."/>
            <person name="Jhaveri J."/>
            <person name="Lu J."/>
            <person name="Miller N.M."/>
            <person name="Norton S."/>
            <person name="Chen Q."/>
            <person name="Phoolcharoen W."/>
            <person name="Ohlin V."/>
            <person name="Ondrusek D."/>
            <person name="Pride N."/>
            <person name="Stricklin S.L."/>
            <person name="Sun J."/>
            <person name="Wheeler C."/>
            <person name="Wilson L."/>
            <person name="Zhu H."/>
            <person name="Wood D.W."/>
        </authorList>
    </citation>
    <scope>NUCLEOTIDE SEQUENCE [LARGE SCALE GENOMIC DNA]</scope>
    <source>
        <strain>K84 / ATCC BAA-868</strain>
    </source>
</reference>
<gene>
    <name evidence="1" type="primary">thiG</name>
    <name type="ordered locus">Arad_7393</name>
</gene>